<dbReference type="EMBL" id="AL123456">
    <property type="protein sequence ID" value="CCP44917.1"/>
    <property type="molecule type" value="Genomic_DNA"/>
</dbReference>
<dbReference type="PIR" id="B70578">
    <property type="entry name" value="B70578"/>
</dbReference>
<dbReference type="RefSeq" id="NP_216658.1">
    <property type="nucleotide sequence ID" value="NC_000962.3"/>
</dbReference>
<dbReference type="RefSeq" id="WP_003411124.1">
    <property type="nucleotide sequence ID" value="NZ_NVQJ01000044.1"/>
</dbReference>
<dbReference type="PDB" id="8C26">
    <property type="method" value="X-ray"/>
    <property type="resolution" value="2.35 A"/>
    <property type="chains" value="A=1-105"/>
</dbReference>
<dbReference type="PDBsum" id="8C26"/>
<dbReference type="SMR" id="P9WHG5"/>
<dbReference type="STRING" id="83332.Rv2142c"/>
<dbReference type="PaxDb" id="83332-Rv2142c"/>
<dbReference type="GeneID" id="888770"/>
<dbReference type="KEGG" id="mtu:Rv2142c"/>
<dbReference type="KEGG" id="mtv:RVBD_2142c"/>
<dbReference type="TubercuList" id="Rv2142c"/>
<dbReference type="eggNOG" id="COG3668">
    <property type="taxonomic scope" value="Bacteria"/>
</dbReference>
<dbReference type="InParanoid" id="P9WHG5"/>
<dbReference type="OrthoDB" id="595476at2"/>
<dbReference type="Proteomes" id="UP000001584">
    <property type="component" value="Chromosome"/>
</dbReference>
<dbReference type="GO" id="GO:0044003">
    <property type="term" value="P:symbiont-mediated perturbation of host process"/>
    <property type="evidence" value="ECO:0000315"/>
    <property type="project" value="MTBBASE"/>
</dbReference>
<dbReference type="Gene3D" id="3.30.2310.20">
    <property type="entry name" value="RelE-like"/>
    <property type="match status" value="1"/>
</dbReference>
<dbReference type="InterPro" id="IPR007712">
    <property type="entry name" value="RelE/ParE_toxin"/>
</dbReference>
<dbReference type="InterPro" id="IPR035093">
    <property type="entry name" value="RelE/ParE_toxin_dom_sf"/>
</dbReference>
<dbReference type="InterPro" id="IPR051803">
    <property type="entry name" value="TA_system_RelE-like_toxin"/>
</dbReference>
<dbReference type="PANTHER" id="PTHR33755">
    <property type="entry name" value="TOXIN PARE1-RELATED"/>
    <property type="match status" value="1"/>
</dbReference>
<dbReference type="PANTHER" id="PTHR33755:SF8">
    <property type="entry name" value="TOXIN PARE2"/>
    <property type="match status" value="1"/>
</dbReference>
<dbReference type="Pfam" id="PF05016">
    <property type="entry name" value="ParE_toxin"/>
    <property type="match status" value="1"/>
</dbReference>
<reference key="1">
    <citation type="journal article" date="1998" name="Nature">
        <title>Deciphering the biology of Mycobacterium tuberculosis from the complete genome sequence.</title>
        <authorList>
            <person name="Cole S.T."/>
            <person name="Brosch R."/>
            <person name="Parkhill J."/>
            <person name="Garnier T."/>
            <person name="Churcher C.M."/>
            <person name="Harris D.E."/>
            <person name="Gordon S.V."/>
            <person name="Eiglmeier K."/>
            <person name="Gas S."/>
            <person name="Barry C.E. III"/>
            <person name="Tekaia F."/>
            <person name="Badcock K."/>
            <person name="Basham D."/>
            <person name="Brown D."/>
            <person name="Chillingworth T."/>
            <person name="Connor R."/>
            <person name="Davies R.M."/>
            <person name="Devlin K."/>
            <person name="Feltwell T."/>
            <person name="Gentles S."/>
            <person name="Hamlin N."/>
            <person name="Holroyd S."/>
            <person name="Hornsby T."/>
            <person name="Jagels K."/>
            <person name="Krogh A."/>
            <person name="McLean J."/>
            <person name="Moule S."/>
            <person name="Murphy L.D."/>
            <person name="Oliver S."/>
            <person name="Osborne J."/>
            <person name="Quail M.A."/>
            <person name="Rajandream M.A."/>
            <person name="Rogers J."/>
            <person name="Rutter S."/>
            <person name="Seeger K."/>
            <person name="Skelton S."/>
            <person name="Squares S."/>
            <person name="Squares R."/>
            <person name="Sulston J.E."/>
            <person name="Taylor K."/>
            <person name="Whitehead S."/>
            <person name="Barrell B.G."/>
        </authorList>
    </citation>
    <scope>NUCLEOTIDE SEQUENCE [LARGE SCALE GENOMIC DNA]</scope>
    <source>
        <strain>ATCC 25618 / H37Rv</strain>
    </source>
</reference>
<reference key="2">
    <citation type="journal article" date="2005" name="Nucleic Acids Res.">
        <title>Toxin-antitoxin loci are highly abundant in free-living but lost from host-associated prokaryotes.</title>
        <authorList>
            <person name="Pandey D.P."/>
            <person name="Gerdes K."/>
        </authorList>
    </citation>
    <scope>POSSIBLE FUNCTION</scope>
    <source>
        <strain>ATCC 25618 / H37Rv</strain>
    </source>
</reference>
<reference key="3">
    <citation type="journal article" date="2009" name="FEMS Microbiol. Lett.">
        <title>Killing activity and rescue function of genome-wide toxin-antitoxin loci of Mycobacterium tuberculosis.</title>
        <authorList>
            <person name="Gupta A."/>
        </authorList>
    </citation>
    <scope>EXPRESSION IN E.COLI</scope>
    <scope>FUNCTION AS A TOXIN</scope>
    <source>
        <strain>ATCC 25618 / H37Rv</strain>
    </source>
</reference>
<reference key="4">
    <citation type="journal article" date="2011" name="Mol. Cell. Proteomics">
        <title>Proteogenomic analysis of Mycobacterium tuberculosis by high resolution mass spectrometry.</title>
        <authorList>
            <person name="Kelkar D.S."/>
            <person name="Kumar D."/>
            <person name="Kumar P."/>
            <person name="Balakrishnan L."/>
            <person name="Muthusamy B."/>
            <person name="Yadav A.K."/>
            <person name="Shrivastava P."/>
            <person name="Marimuthu A."/>
            <person name="Anand S."/>
            <person name="Sundaram H."/>
            <person name="Kingsbury R."/>
            <person name="Harsha H.C."/>
            <person name="Nair B."/>
            <person name="Prasad T.S."/>
            <person name="Chauhan D.S."/>
            <person name="Katoch K."/>
            <person name="Katoch V.M."/>
            <person name="Kumar P."/>
            <person name="Chaerkady R."/>
            <person name="Ramachandran S."/>
            <person name="Dash D."/>
            <person name="Pandey A."/>
        </authorList>
    </citation>
    <scope>IDENTIFICATION BY MASS SPECTROMETRY [LARGE SCALE ANALYSIS]</scope>
    <source>
        <strain>ATCC 25618 / H37Rv</strain>
    </source>
</reference>
<comment type="function">
    <text evidence="1">Toxic component of a type II toxin-antitoxin (TA) system. Upon expression in E.coli inhibits cell growth and colony formation. Its toxic effect is neutralized by coexpression with cognate antitoxin ParD2.</text>
</comment>
<comment type="similarity">
    <text evidence="2">Belongs to the RelE toxin family.</text>
</comment>
<sequence>MTRRLRVHNGVEDDLFEAFSYYADAAPDQIDRLYNLFVDAVTKRIPQAPNAFAPLFKHYRHIYLRPFRYYVAYRTTDEAIDILAVRHGMENPNAVEAEISGRTFE</sequence>
<feature type="chain" id="PRO_0000408373" description="Toxin ParE2">
    <location>
        <begin position="1"/>
        <end position="105"/>
    </location>
</feature>
<feature type="strand" evidence="3">
    <location>
        <begin position="4"/>
        <end position="8"/>
    </location>
</feature>
<feature type="helix" evidence="3">
    <location>
        <begin position="10"/>
        <end position="19"/>
    </location>
</feature>
<feature type="turn" evidence="3">
    <location>
        <begin position="20"/>
        <end position="25"/>
    </location>
</feature>
<feature type="helix" evidence="3">
    <location>
        <begin position="27"/>
        <end position="42"/>
    </location>
</feature>
<feature type="helix" evidence="3">
    <location>
        <begin position="44"/>
        <end position="47"/>
    </location>
</feature>
<feature type="turn" evidence="3">
    <location>
        <begin position="49"/>
        <end position="51"/>
    </location>
</feature>
<feature type="strand" evidence="3">
    <location>
        <begin position="54"/>
        <end position="56"/>
    </location>
</feature>
<feature type="strand" evidence="3">
    <location>
        <begin position="59"/>
        <end position="63"/>
    </location>
</feature>
<feature type="strand" evidence="3">
    <location>
        <begin position="67"/>
        <end position="75"/>
    </location>
</feature>
<feature type="strand" evidence="3">
    <location>
        <begin position="77"/>
        <end position="87"/>
    </location>
</feature>
<keyword id="KW-0002">3D-structure</keyword>
<keyword id="KW-1185">Reference proteome</keyword>
<keyword id="KW-1277">Toxin-antitoxin system</keyword>
<proteinExistence type="evidence at protein level"/>
<evidence type="ECO:0000269" key="1">
    <source>
    </source>
</evidence>
<evidence type="ECO:0000305" key="2"/>
<evidence type="ECO:0007829" key="3">
    <source>
        <dbReference type="PDB" id="8C26"/>
    </source>
</evidence>
<protein>
    <recommendedName>
        <fullName>Toxin ParE2</fullName>
    </recommendedName>
</protein>
<name>PARE2_MYCTU</name>
<gene>
    <name type="primary">parE2</name>
    <name type="ordered locus">Rv2142c</name>
</gene>
<accession>P9WHG5</accession>
<accession>L0TBG4</accession>
<accession>O06233</accession>
<accession>Q7D7G6</accession>
<organism>
    <name type="scientific">Mycobacterium tuberculosis (strain ATCC 25618 / H37Rv)</name>
    <dbReference type="NCBI Taxonomy" id="83332"/>
    <lineage>
        <taxon>Bacteria</taxon>
        <taxon>Bacillati</taxon>
        <taxon>Actinomycetota</taxon>
        <taxon>Actinomycetes</taxon>
        <taxon>Mycobacteriales</taxon>
        <taxon>Mycobacteriaceae</taxon>
        <taxon>Mycobacterium</taxon>
        <taxon>Mycobacterium tuberculosis complex</taxon>
    </lineage>
</organism>